<comment type="function">
    <text evidence="1">May act as a neurotransmitter or neuromodulator.</text>
</comment>
<comment type="subcellular location">
    <subcellularLocation>
        <location evidence="5">Secreted</location>
    </subcellularLocation>
</comment>
<comment type="PTM">
    <text evidence="3">Position 8 could be leucine amide or isoleucine amide.</text>
</comment>
<comment type="mass spectrometry" mass="921.51" method="MALDI" evidence="3"/>
<comment type="similarity">
    <text evidence="2">Belongs to the allatostatin family.</text>
</comment>
<sequence length="8" mass="922">LPVYNFGL</sequence>
<organism>
    <name type="scientific">Rhodnius prolixus</name>
    <name type="common">Triatomid bug</name>
    <dbReference type="NCBI Taxonomy" id="13249"/>
    <lineage>
        <taxon>Eukaryota</taxon>
        <taxon>Metazoa</taxon>
        <taxon>Ecdysozoa</taxon>
        <taxon>Arthropoda</taxon>
        <taxon>Hexapoda</taxon>
        <taxon>Insecta</taxon>
        <taxon>Pterygota</taxon>
        <taxon>Neoptera</taxon>
        <taxon>Paraneoptera</taxon>
        <taxon>Hemiptera</taxon>
        <taxon>Heteroptera</taxon>
        <taxon>Panheteroptera</taxon>
        <taxon>Cimicomorpha</taxon>
        <taxon>Reduviidae</taxon>
        <taxon>Triatominae</taxon>
        <taxon>Rhodnius</taxon>
    </lineage>
</organism>
<keyword id="KW-0027">Amidation</keyword>
<keyword id="KW-0903">Direct protein sequencing</keyword>
<keyword id="KW-0527">Neuropeptide</keyword>
<keyword id="KW-1185">Reference proteome</keyword>
<keyword id="KW-0964">Secreted</keyword>
<reference evidence="5" key="1">
    <citation type="journal article" date="2009" name="Proteomics">
        <title>The neuropeptidome of Rhodnius prolixus brain.</title>
        <authorList>
            <person name="Ons S."/>
            <person name="Richter F."/>
            <person name="Urlaub H."/>
            <person name="Pomar R.R."/>
        </authorList>
    </citation>
    <scope>PROTEIN SEQUENCE</scope>
    <scope>MASS SPECTROMETRY</scope>
    <scope>AMIDATION AT LEU-8</scope>
    <source>
        <tissue evidence="3">Brain</tissue>
    </source>
</reference>
<name>ALL1_RHOPR</name>
<evidence type="ECO:0000250" key="1">
    <source>
        <dbReference type="UniProtKB" id="Q9VC44"/>
    </source>
</evidence>
<evidence type="ECO:0000255" key="2"/>
<evidence type="ECO:0000269" key="3">
    <source>
    </source>
</evidence>
<evidence type="ECO:0000303" key="4">
    <source>
    </source>
</evidence>
<evidence type="ECO:0000305" key="5"/>
<dbReference type="InParanoid" id="P85822"/>
<dbReference type="Proteomes" id="UP000015103">
    <property type="component" value="Unassembled WGS sequence"/>
</dbReference>
<dbReference type="GO" id="GO:0005576">
    <property type="term" value="C:extracellular region"/>
    <property type="evidence" value="ECO:0007669"/>
    <property type="project" value="UniProtKB-SubCell"/>
</dbReference>
<dbReference type="GO" id="GO:0007218">
    <property type="term" value="P:neuropeptide signaling pathway"/>
    <property type="evidence" value="ECO:0007669"/>
    <property type="project" value="UniProtKB-KW"/>
</dbReference>
<proteinExistence type="evidence at protein level"/>
<feature type="peptide" id="PRO_0000365743" description="Allatostatin-1" evidence="3">
    <location>
        <begin position="1"/>
        <end position="8"/>
    </location>
</feature>
<feature type="modified residue" description="Leucine amide" evidence="3">
    <location>
        <position position="8"/>
    </location>
</feature>
<feature type="unsure residue" description="L or I" evidence="3">
    <location>
        <position position="1"/>
    </location>
</feature>
<feature type="unsure residue" description="L or I" evidence="3">
    <location>
        <position position="8"/>
    </location>
</feature>
<protein>
    <recommendedName>
        <fullName evidence="4">Allatostatin-1</fullName>
        <shortName evidence="4">Rhopr-AST-1</shortName>
    </recommendedName>
</protein>
<accession>P85822</accession>